<name>RPOY_BACAC</name>
<comment type="function">
    <text evidence="1">A non-essential component of RNA polymerase (RNAP).</text>
</comment>
<comment type="catalytic activity">
    <reaction evidence="1">
        <text>RNA(n) + a ribonucleoside 5'-triphosphate = RNA(n+1) + diphosphate</text>
        <dbReference type="Rhea" id="RHEA:21248"/>
        <dbReference type="Rhea" id="RHEA-COMP:14527"/>
        <dbReference type="Rhea" id="RHEA-COMP:17342"/>
        <dbReference type="ChEBI" id="CHEBI:33019"/>
        <dbReference type="ChEBI" id="CHEBI:61557"/>
        <dbReference type="ChEBI" id="CHEBI:140395"/>
        <dbReference type="EC" id="2.7.7.6"/>
    </reaction>
</comment>
<comment type="subunit">
    <text evidence="1">RNAP is composed of a core of 2 alpha, a beta and a beta' subunit. The core is associated with a delta subunit, and at least one of epsilon or omega. When a sigma factor is associated with the core the holoenzyme is formed, which can initiate transcription.</text>
</comment>
<comment type="similarity">
    <text evidence="1">Belongs to the RNA polymerase subunit epsilon family.</text>
</comment>
<proteinExistence type="inferred from homology"/>
<accession>C3LI42</accession>
<sequence length="70" mass="8189">MIFKVFYQEKMTEVPVRENTKVLYLEATSEKDVRTKLNKFAYNIEFVQSVTGNHLEYEKANADLTLAEIV</sequence>
<gene>
    <name evidence="1" type="primary">rpoY</name>
    <name type="ordered locus">BAMEG_4229</name>
</gene>
<keyword id="KW-0240">DNA-directed RNA polymerase</keyword>
<keyword id="KW-0548">Nucleotidyltransferase</keyword>
<keyword id="KW-0804">Transcription</keyword>
<keyword id="KW-0808">Transferase</keyword>
<dbReference type="EC" id="2.7.7.6" evidence="1"/>
<dbReference type="EMBL" id="CP001215">
    <property type="protein sequence ID" value="ACP12543.1"/>
    <property type="molecule type" value="Genomic_DNA"/>
</dbReference>
<dbReference type="RefSeq" id="WP_000576443.1">
    <property type="nucleotide sequence ID" value="NC_012581.1"/>
</dbReference>
<dbReference type="SMR" id="C3LI42"/>
<dbReference type="KEGG" id="bah:BAMEG_4229"/>
<dbReference type="HOGENOM" id="CLU_187518_0_0_9"/>
<dbReference type="GO" id="GO:0000428">
    <property type="term" value="C:DNA-directed RNA polymerase complex"/>
    <property type="evidence" value="ECO:0007669"/>
    <property type="project" value="UniProtKB-KW"/>
</dbReference>
<dbReference type="GO" id="GO:0003677">
    <property type="term" value="F:DNA binding"/>
    <property type="evidence" value="ECO:0007669"/>
    <property type="project" value="UniProtKB-UniRule"/>
</dbReference>
<dbReference type="GO" id="GO:0003899">
    <property type="term" value="F:DNA-directed RNA polymerase activity"/>
    <property type="evidence" value="ECO:0007669"/>
    <property type="project" value="UniProtKB-UniRule"/>
</dbReference>
<dbReference type="GO" id="GO:0006351">
    <property type="term" value="P:DNA-templated transcription"/>
    <property type="evidence" value="ECO:0007669"/>
    <property type="project" value="UniProtKB-UniRule"/>
</dbReference>
<dbReference type="Gene3D" id="3.10.20.730">
    <property type="entry name" value="RNAP, epsilon subunit-like"/>
    <property type="match status" value="1"/>
</dbReference>
<dbReference type="HAMAP" id="MF_01553">
    <property type="entry name" value="RNApol_bact_RpoY"/>
    <property type="match status" value="1"/>
</dbReference>
<dbReference type="InterPro" id="IPR009907">
    <property type="entry name" value="RpoY"/>
</dbReference>
<dbReference type="NCBIfam" id="NF010188">
    <property type="entry name" value="PRK13667.1"/>
    <property type="match status" value="1"/>
</dbReference>
<dbReference type="Pfam" id="PF07288">
    <property type="entry name" value="RpoY"/>
    <property type="match status" value="1"/>
</dbReference>
<evidence type="ECO:0000255" key="1">
    <source>
        <dbReference type="HAMAP-Rule" id="MF_01553"/>
    </source>
</evidence>
<protein>
    <recommendedName>
        <fullName evidence="1">DNA-directed RNA polymerase subunit epsilon</fullName>
        <shortName evidence="1">RNAP epsilon subunit</shortName>
        <ecNumber evidence="1">2.7.7.6</ecNumber>
    </recommendedName>
    <alternativeName>
        <fullName evidence="1">RNA polymerase epsilon subunit</fullName>
    </alternativeName>
    <alternativeName>
        <fullName evidence="1">Transcriptase subunit epsilon</fullName>
    </alternativeName>
</protein>
<feature type="chain" id="PRO_1000185331" description="DNA-directed RNA polymerase subunit epsilon">
    <location>
        <begin position="1"/>
        <end position="70"/>
    </location>
</feature>
<organism>
    <name type="scientific">Bacillus anthracis (strain CDC 684 / NRRL 3495)</name>
    <dbReference type="NCBI Taxonomy" id="568206"/>
    <lineage>
        <taxon>Bacteria</taxon>
        <taxon>Bacillati</taxon>
        <taxon>Bacillota</taxon>
        <taxon>Bacilli</taxon>
        <taxon>Bacillales</taxon>
        <taxon>Bacillaceae</taxon>
        <taxon>Bacillus</taxon>
        <taxon>Bacillus cereus group</taxon>
    </lineage>
</organism>
<reference key="1">
    <citation type="submission" date="2008-10" db="EMBL/GenBank/DDBJ databases">
        <title>Genome sequence of Bacillus anthracis str. CDC 684.</title>
        <authorList>
            <person name="Dodson R.J."/>
            <person name="Munk A.C."/>
            <person name="Brettin T."/>
            <person name="Bruce D."/>
            <person name="Detter C."/>
            <person name="Tapia R."/>
            <person name="Han C."/>
            <person name="Sutton G."/>
            <person name="Sims D."/>
        </authorList>
    </citation>
    <scope>NUCLEOTIDE SEQUENCE [LARGE SCALE GENOMIC DNA]</scope>
    <source>
        <strain>CDC 684 / NRRL 3495</strain>
    </source>
</reference>